<organism>
    <name type="scientific">Elizabethkingia miricola</name>
    <name type="common">Chryseobacterium miricola</name>
    <dbReference type="NCBI Taxonomy" id="172045"/>
    <lineage>
        <taxon>Bacteria</taxon>
        <taxon>Pseudomonadati</taxon>
        <taxon>Bacteroidota</taxon>
        <taxon>Flavobacteriia</taxon>
        <taxon>Flavobacteriales</taxon>
        <taxon>Weeksellaceae</taxon>
        <taxon>Elizabethkingia</taxon>
    </lineage>
</organism>
<dbReference type="EC" id="3.5.1.26"/>
<dbReference type="EMBL" id="U08028">
    <property type="protein sequence ID" value="AAA68868.1"/>
    <property type="molecule type" value="Genomic_DNA"/>
</dbReference>
<dbReference type="PIR" id="S69194">
    <property type="entry name" value="S69194"/>
</dbReference>
<dbReference type="PDB" id="1AYY">
    <property type="method" value="X-ray"/>
    <property type="resolution" value="2.32 A"/>
    <property type="chains" value="A/C=46-196, B/D=197-340"/>
</dbReference>
<dbReference type="PDB" id="1P4K">
    <property type="method" value="X-ray"/>
    <property type="resolution" value="1.90 A"/>
    <property type="chains" value="A/C=46-340"/>
</dbReference>
<dbReference type="PDB" id="1P4V">
    <property type="method" value="X-ray"/>
    <property type="resolution" value="1.90 A"/>
    <property type="chains" value="A/C=46-340"/>
</dbReference>
<dbReference type="PDB" id="2GAC">
    <property type="method" value="X-ray"/>
    <property type="resolution" value="2.10 A"/>
    <property type="chains" value="A/C=46-196, B/D=198-340"/>
</dbReference>
<dbReference type="PDB" id="2GAW">
    <property type="method" value="X-ray"/>
    <property type="resolution" value="2.20 A"/>
    <property type="chains" value="A/C=46-196, B/D=197-340"/>
</dbReference>
<dbReference type="PDB" id="2GL9">
    <property type="method" value="X-ray"/>
    <property type="resolution" value="2.00 A"/>
    <property type="chains" value="A/C=46-196, B/D=197-340"/>
</dbReference>
<dbReference type="PDB" id="3LJQ">
    <property type="method" value="X-ray"/>
    <property type="resolution" value="1.90 A"/>
    <property type="chains" value="A/C=46-340"/>
</dbReference>
<dbReference type="PDB" id="4R4Y">
    <property type="method" value="X-ray"/>
    <property type="resolution" value="2.10 A"/>
    <property type="chains" value="A/B=46-340"/>
</dbReference>
<dbReference type="PDB" id="5V2I">
    <property type="method" value="X-ray"/>
    <property type="resolution" value="1.83 A"/>
    <property type="chains" value="A/B=46-340"/>
</dbReference>
<dbReference type="PDB" id="9GAA">
    <property type="method" value="X-ray"/>
    <property type="resolution" value="2.10 A"/>
    <property type="chains" value="A/C=46-340"/>
</dbReference>
<dbReference type="PDB" id="9GAC">
    <property type="method" value="X-ray"/>
    <property type="resolution" value="1.90 A"/>
    <property type="chains" value="A/C=46-340"/>
</dbReference>
<dbReference type="PDB" id="9GAF">
    <property type="method" value="X-ray"/>
    <property type="resolution" value="1.90 A"/>
    <property type="chains" value="A/C=46-340"/>
</dbReference>
<dbReference type="PDBsum" id="1AYY"/>
<dbReference type="PDBsum" id="1P4K"/>
<dbReference type="PDBsum" id="1P4V"/>
<dbReference type="PDBsum" id="2GAC"/>
<dbReference type="PDBsum" id="2GAW"/>
<dbReference type="PDBsum" id="2GL9"/>
<dbReference type="PDBsum" id="3LJQ"/>
<dbReference type="PDBsum" id="4R4Y"/>
<dbReference type="PDBsum" id="5V2I"/>
<dbReference type="PDBsum" id="9GAA"/>
<dbReference type="PDBsum" id="9GAC"/>
<dbReference type="PDBsum" id="9GAF"/>
<dbReference type="SMR" id="Q47898"/>
<dbReference type="DIP" id="DIP-61331N"/>
<dbReference type="MEROPS" id="T02.007"/>
<dbReference type="eggNOG" id="COG1446">
    <property type="taxonomic scope" value="Bacteria"/>
</dbReference>
<dbReference type="BRENDA" id="3.5.1.26">
    <property type="organism ID" value="14254"/>
</dbReference>
<dbReference type="EvolutionaryTrace" id="Q47898"/>
<dbReference type="GO" id="GO:0005737">
    <property type="term" value="C:cytoplasm"/>
    <property type="evidence" value="ECO:0007669"/>
    <property type="project" value="TreeGrafter"/>
</dbReference>
<dbReference type="GO" id="GO:0042597">
    <property type="term" value="C:periplasmic space"/>
    <property type="evidence" value="ECO:0007669"/>
    <property type="project" value="UniProtKB-SubCell"/>
</dbReference>
<dbReference type="GO" id="GO:0003948">
    <property type="term" value="F:N4-(beta-N-acetylglucosaminyl)-L-asparaginase activity"/>
    <property type="evidence" value="ECO:0007669"/>
    <property type="project" value="UniProtKB-EC"/>
</dbReference>
<dbReference type="GO" id="GO:0008233">
    <property type="term" value="F:peptidase activity"/>
    <property type="evidence" value="ECO:0007669"/>
    <property type="project" value="UniProtKB-KW"/>
</dbReference>
<dbReference type="GO" id="GO:0006508">
    <property type="term" value="P:proteolysis"/>
    <property type="evidence" value="ECO:0007669"/>
    <property type="project" value="UniProtKB-KW"/>
</dbReference>
<dbReference type="CDD" id="cd04513">
    <property type="entry name" value="Glycosylasparaginase"/>
    <property type="match status" value="1"/>
</dbReference>
<dbReference type="FunFam" id="3.60.20.30:FF:000005">
    <property type="entry name" value="N(4)-(Beta-N-acetylglucosaminyl)-L-asparaginase"/>
    <property type="match status" value="1"/>
</dbReference>
<dbReference type="Gene3D" id="3.60.20.30">
    <property type="entry name" value="(Glycosyl)asparaginase"/>
    <property type="match status" value="1"/>
</dbReference>
<dbReference type="InterPro" id="IPR029055">
    <property type="entry name" value="Ntn_hydrolases_N"/>
</dbReference>
<dbReference type="InterPro" id="IPR000246">
    <property type="entry name" value="Peptidase_T2"/>
</dbReference>
<dbReference type="InterPro" id="IPR019546">
    <property type="entry name" value="TAT_signal_bac_arc"/>
</dbReference>
<dbReference type="NCBIfam" id="TIGR01409">
    <property type="entry name" value="TAT_signal_seq"/>
    <property type="match status" value="1"/>
</dbReference>
<dbReference type="PANTHER" id="PTHR10188">
    <property type="entry name" value="L-ASPARAGINASE"/>
    <property type="match status" value="1"/>
</dbReference>
<dbReference type="PANTHER" id="PTHR10188:SF6">
    <property type="entry name" value="N(4)-(BETA-N-ACETYLGLUCOSAMINYL)-L-ASPARAGINASE"/>
    <property type="match status" value="1"/>
</dbReference>
<dbReference type="Pfam" id="PF01112">
    <property type="entry name" value="Asparaginase_2"/>
    <property type="match status" value="1"/>
</dbReference>
<dbReference type="SUPFAM" id="SSF56235">
    <property type="entry name" value="N-terminal nucleophile aminohydrolases (Ntn hydrolases)"/>
    <property type="match status" value="1"/>
</dbReference>
<reference key="1">
    <citation type="journal article" date="1995" name="Arch. Biochem. Biophys.">
        <title>Molecular cloning and sequence analysis of Flavobacterium meningosepticum glycosylasparaginase: a single gene encodes the alpha and beta subunits.</title>
        <authorList>
            <person name="Tarentino A.L."/>
            <person name="Quinones G."/>
            <person name="Hauer C.R."/>
            <person name="Changchien L.-M."/>
            <person name="Plummer T.H. Jr."/>
        </authorList>
    </citation>
    <scope>NUCLEOTIDE SEQUENCE [GENOMIC DNA]</scope>
    <scope>PARTIAL PROTEIN SEQUENCE</scope>
    <source>
        <strain>ATCC 33958</strain>
    </source>
</reference>
<reference key="2">
    <citation type="journal article" date="1993" name="Biochem. Biophys. Res. Commun.">
        <title>The first demonstration of a procaryotic glycosylasparaginase.</title>
        <authorList>
            <person name="Tarentino A.L."/>
            <person name="Plummer T.H. Jr."/>
        </authorList>
    </citation>
    <scope>PROTEIN SEQUENCE OF 46-59 AND 197-211</scope>
</reference>
<reference key="3">
    <citation type="journal article" date="1998" name="Protein Sci.">
        <title>Crystal structure of glycosylasparaginase from Flavobacterium meningosepticum.</title>
        <authorList>
            <person name="Xuan J."/>
            <person name="Tarentino A.L."/>
            <person name="Grimwood B.G."/>
            <person name="Plummer T.H. Jr."/>
            <person name="Cui T."/>
            <person name="Guan C."/>
            <person name="van Roey P."/>
        </authorList>
    </citation>
    <scope>X-RAY CRYSTALLOGRAPHY (2.32 ANGSTROMS)</scope>
</reference>
<reference key="4">
    <citation type="journal article" date="1998" name="J. Biol. Chem.">
        <title>Crystal structures of Flavobacterium glycosylasparaginase. An N-terminal nucleophile hydrolase activated by intramolecular proteolysis.</title>
        <authorList>
            <person name="Guo H.C."/>
            <person name="Xu Q."/>
            <person name="Buckley D."/>
            <person name="Guan C."/>
        </authorList>
    </citation>
    <scope>X-RAY CRYSTALLOGRAPHY (2.10 ANGSTROMS)</scope>
    <scope>ACTIVE SITE</scope>
    <scope>SUBUNIT</scope>
</reference>
<reference key="5">
    <citation type="journal article" date="1999" name="Cell">
        <title>Structural insights into the mechanism of intramolecular proteolysis.</title>
        <authorList>
            <person name="Xu Q."/>
            <person name="Buckley D."/>
            <person name="Guan C."/>
            <person name="Guo H.C."/>
        </authorList>
    </citation>
    <scope>X-RAY CRYSTALLOGRAPHY (1.90 ANGSTROMS) OF 47-340</scope>
    <scope>ACTIVE SITE</scope>
    <scope>CLEAVAGE BY AUTOCATALYSIS</scope>
    <scope>MUTAGENESIS OF THR-197</scope>
    <scope>SUBUNIT</scope>
</reference>
<reference key="6">
    <citation type="journal article" date="2007" name="J. Mol. Biol.">
        <title>Crystallographic snapshot of a productive glycosylasparaginase-substrate complex.</title>
        <authorList>
            <person name="Wang Y."/>
            <person name="Guo H.C."/>
        </authorList>
    </citation>
    <scope>X-RAY CRYSTALLOGRAPHY (2.00 ANGSTROMS) OF MUTANT CYS-197 IN COMPLEX WITH SUBSTRATE</scope>
    <scope>ACTIVE SITE</scope>
    <scope>CLEAVAGE BY AUTOCATALYSIS</scope>
    <scope>SUBUNIT</scope>
    <scope>MUTAGENESIS OF THR-197</scope>
</reference>
<reference key="7">
    <citation type="journal article" date="2010" name="J. Mol. Biol.">
        <title>Crystallographic snapshot of glycosylasparaginase precursor poised for autoprocessing.</title>
        <authorList>
            <person name="Wang Y."/>
            <person name="Guo H.C."/>
        </authorList>
    </citation>
    <scope>X-RAY CRYSTALLOGRAPHY (1.90 ANGSTROMS) OF 46-340 OF MUTANT CYS-197</scope>
    <scope>ACTIVE SITE</scope>
    <scope>CLEAVAGE BY AUTOCATALYSIS</scope>
    <scope>SUBUNIT</scope>
</reference>
<protein>
    <recommendedName>
        <fullName>N(4)-(Beta-N-acetylglucosaminyl)-L-asparaginase</fullName>
        <ecNumber>3.5.1.26</ecNumber>
    </recommendedName>
    <alternativeName>
        <fullName>Aspartylglucosaminidase</fullName>
        <shortName>AGA</shortName>
    </alternativeName>
    <alternativeName>
        <fullName>Glycosylasparaginase</fullName>
    </alternativeName>
    <alternativeName>
        <fullName>N4-(N-acetyl-beta-glucosaminyl)-L-asparagine amidase</fullName>
    </alternativeName>
    <component>
        <recommendedName>
            <fullName>Glycosylasparaginase alpha chain</fullName>
        </recommendedName>
    </component>
    <component>
        <recommendedName>
            <fullName>Glycosylasparaginase beta chain</fullName>
        </recommendedName>
    </component>
</protein>
<sequence>MRIIYKQQTMNNNRRDFIKKLGIATAAIAINPLEAKNLLDTSEPKTTNKPIVLSTWNFGLHANVEAWKVLSKGGKALDAVEKGVRLVEDDPTERSVGYGGRPDRDGRVTLDACIMDENYNIGSVACMEHIKNPISVARAVMEKTPHVMLVGDGALEFALSQGFKKENLLTAESEKEWKEWLKTSQYKPIVNIENHDTIGMIALDAQGNLSGACTTSGMAYKMHGRVGDSPIIGAGLFVDNEIGAATATGHGEEVIRTVGTHLVVELMNQGRTPQQACKEAVERIVKIVNRRGKNLKDIQVGFIALNKKGEYGAYCIQDGFNFAVHDQKGNRLETPGFALK</sequence>
<name>ASPG_ELIMR</name>
<feature type="signal peptide" evidence="4">
    <location>
        <begin position="1"/>
        <end position="45"/>
    </location>
</feature>
<feature type="chain" id="PRO_0000002347" description="Glycosylasparaginase alpha chain">
    <location>
        <begin position="46"/>
        <end position="196"/>
    </location>
</feature>
<feature type="chain" id="PRO_0000002348" description="Glycosylasparaginase beta chain">
    <location>
        <begin position="197"/>
        <end position="340"/>
    </location>
</feature>
<feature type="active site" description="Nucleophile" evidence="1 2 3 5">
    <location>
        <position position="197"/>
    </location>
</feature>
<feature type="binding site">
    <location>
        <begin position="225"/>
        <end position="228"/>
    </location>
    <ligand>
        <name>substrate</name>
    </ligand>
</feature>
<feature type="binding site">
    <location>
        <begin position="248"/>
        <end position="251"/>
    </location>
    <ligand>
        <name>substrate</name>
    </ligand>
</feature>
<feature type="mutagenesis site" description="Abolishes autocatalytic cleavage." evidence="1 2">
    <original>T</original>
    <variation>A</variation>
    <location>
        <position position="197"/>
    </location>
</feature>
<feature type="mutagenesis site" description="Strongly reduced enzyme activity." evidence="1 2">
    <original>T</original>
    <variation>C</variation>
    <location>
        <position position="197"/>
    </location>
</feature>
<feature type="strand" evidence="9">
    <location>
        <begin position="50"/>
        <end position="56"/>
    </location>
</feature>
<feature type="helix" evidence="9">
    <location>
        <begin position="59"/>
        <end position="70"/>
    </location>
</feature>
<feature type="turn" evidence="9">
    <location>
        <begin position="71"/>
        <end position="73"/>
    </location>
</feature>
<feature type="helix" evidence="9">
    <location>
        <begin position="76"/>
        <end position="89"/>
    </location>
</feature>
<feature type="helix" evidence="8">
    <location>
        <begin position="91"/>
        <end position="95"/>
    </location>
</feature>
<feature type="helix" evidence="10">
    <location>
        <begin position="97"/>
        <end position="99"/>
    </location>
</feature>
<feature type="strand" evidence="9">
    <location>
        <begin position="110"/>
        <end position="115"/>
    </location>
</feature>
<feature type="strand" evidence="9">
    <location>
        <begin position="121"/>
        <end position="127"/>
    </location>
</feature>
<feature type="helix" evidence="9">
    <location>
        <begin position="133"/>
        <end position="143"/>
    </location>
</feature>
<feature type="strand" evidence="9">
    <location>
        <begin position="147"/>
        <end position="150"/>
    </location>
</feature>
<feature type="helix" evidence="9">
    <location>
        <begin position="151"/>
        <end position="160"/>
    </location>
</feature>
<feature type="helix" evidence="9">
    <location>
        <begin position="171"/>
        <end position="180"/>
    </location>
</feature>
<feature type="turn" evidence="8">
    <location>
        <begin position="181"/>
        <end position="183"/>
    </location>
</feature>
<feature type="strand" evidence="7">
    <location>
        <begin position="190"/>
        <end position="195"/>
    </location>
</feature>
<feature type="strand" evidence="9">
    <location>
        <begin position="198"/>
        <end position="203"/>
    </location>
</feature>
<feature type="strand" evidence="9">
    <location>
        <begin position="209"/>
        <end position="215"/>
    </location>
</feature>
<feature type="turn" evidence="9">
    <location>
        <begin position="233"/>
        <end position="235"/>
    </location>
</feature>
<feature type="strand" evidence="9">
    <location>
        <begin position="236"/>
        <end position="239"/>
    </location>
</feature>
<feature type="turn" evidence="9">
    <location>
        <begin position="240"/>
        <end position="242"/>
    </location>
</feature>
<feature type="strand" evidence="9">
    <location>
        <begin position="243"/>
        <end position="249"/>
    </location>
</feature>
<feature type="helix" evidence="9">
    <location>
        <begin position="251"/>
        <end position="257"/>
    </location>
</feature>
<feature type="helix" evidence="9">
    <location>
        <begin position="259"/>
        <end position="268"/>
    </location>
</feature>
<feature type="helix" evidence="9">
    <location>
        <begin position="273"/>
        <end position="290"/>
    </location>
</feature>
<feature type="helix" evidence="9">
    <location>
        <begin position="295"/>
        <end position="297"/>
    </location>
</feature>
<feature type="strand" evidence="9">
    <location>
        <begin position="300"/>
        <end position="306"/>
    </location>
</feature>
<feature type="strand" evidence="9">
    <location>
        <begin position="311"/>
        <end position="317"/>
    </location>
</feature>
<feature type="strand" evidence="9">
    <location>
        <begin position="322"/>
        <end position="326"/>
    </location>
</feature>
<feature type="strand" evidence="9">
    <location>
        <begin position="329"/>
        <end position="333"/>
    </location>
</feature>
<feature type="strand" evidence="9">
    <location>
        <begin position="336"/>
        <end position="338"/>
    </location>
</feature>
<comment type="function">
    <text>Cleaves the GlcNAc-Asn bond which joins oligosaccharides to the peptide of asparagine-linked glycoproteins. Requires that the glycosylated asparagine moiety is not substituted on its N-(R1) and C- (R2) terminus.</text>
</comment>
<comment type="catalytic activity">
    <reaction>
        <text>N(4)-(beta-N-acetyl-D-glucosaminyl)-L-asparagine + H2O = N-acetyl-beta-D-glucosaminylamine + L-aspartate + H(+)</text>
        <dbReference type="Rhea" id="RHEA:11544"/>
        <dbReference type="ChEBI" id="CHEBI:15377"/>
        <dbReference type="ChEBI" id="CHEBI:15378"/>
        <dbReference type="ChEBI" id="CHEBI:15947"/>
        <dbReference type="ChEBI" id="CHEBI:29991"/>
        <dbReference type="ChEBI" id="CHEBI:58080"/>
        <dbReference type="EC" id="3.5.1.26"/>
    </reaction>
</comment>
<comment type="subunit">
    <text evidence="1 2 3 5">Heterotetramer of two alpha and two beta chains arranged as a dimer of alpha/beta heterodimers.</text>
</comment>
<comment type="subcellular location">
    <subcellularLocation>
        <location>Periplasm</location>
    </subcellularLocation>
</comment>
<comment type="PTM">
    <text>Cleaved into an alpha and beta chain by autocatalysis; this activates the enzyme. The N-terminal residue of the beta subunit is responsible for the nucleophile hydrolase activity.</text>
</comment>
<comment type="similarity">
    <text evidence="6">Belongs to the Ntn-hydrolase family.</text>
</comment>
<keyword id="KW-0002">3D-structure</keyword>
<keyword id="KW-0068">Autocatalytic cleavage</keyword>
<keyword id="KW-0903">Direct protein sequencing</keyword>
<keyword id="KW-0378">Hydrolase</keyword>
<keyword id="KW-0574">Periplasm</keyword>
<keyword id="KW-0645">Protease</keyword>
<keyword id="KW-0732">Signal</keyword>
<proteinExistence type="evidence at protein level"/>
<accession>Q47898</accession>
<evidence type="ECO:0000269" key="1">
    <source>
    </source>
</evidence>
<evidence type="ECO:0000269" key="2">
    <source>
    </source>
</evidence>
<evidence type="ECO:0000269" key="3">
    <source>
    </source>
</evidence>
<evidence type="ECO:0000269" key="4">
    <source>
    </source>
</evidence>
<evidence type="ECO:0000269" key="5">
    <source>
    </source>
</evidence>
<evidence type="ECO:0000305" key="6"/>
<evidence type="ECO:0007829" key="7">
    <source>
        <dbReference type="PDB" id="1P4K"/>
    </source>
</evidence>
<evidence type="ECO:0007829" key="8">
    <source>
        <dbReference type="PDB" id="4R4Y"/>
    </source>
</evidence>
<evidence type="ECO:0007829" key="9">
    <source>
        <dbReference type="PDB" id="5V2I"/>
    </source>
</evidence>
<evidence type="ECO:0007829" key="10">
    <source>
        <dbReference type="PDB" id="9GAF"/>
    </source>
</evidence>